<gene>
    <name type="ORF">FG01603</name>
    <name type="ORF">FGRAMPH1_01T03917</name>
</gene>
<organism>
    <name type="scientific">Gibberella zeae (strain ATCC MYA-4620 / CBS 123657 / FGSC 9075 / NRRL 31084 / PH-1)</name>
    <name type="common">Wheat head blight fungus</name>
    <name type="synonym">Fusarium graminearum</name>
    <dbReference type="NCBI Taxonomy" id="229533"/>
    <lineage>
        <taxon>Eukaryota</taxon>
        <taxon>Fungi</taxon>
        <taxon>Dikarya</taxon>
        <taxon>Ascomycota</taxon>
        <taxon>Pezizomycotina</taxon>
        <taxon>Sordariomycetes</taxon>
        <taxon>Hypocreomycetidae</taxon>
        <taxon>Hypocreales</taxon>
        <taxon>Nectriaceae</taxon>
        <taxon>Fusarium</taxon>
    </lineage>
</organism>
<protein>
    <recommendedName>
        <fullName evidence="7">Secreted triacylglycerol lipase LIP1</fullName>
        <ecNumber evidence="4 6">3.1.1.3</ecNumber>
    </recommendedName>
</protein>
<dbReference type="EC" id="3.1.1.3" evidence="4 6"/>
<dbReference type="EMBL" id="HG970332">
    <property type="protein sequence ID" value="CEF73765.1"/>
    <property type="molecule type" value="Genomic_DNA"/>
</dbReference>
<dbReference type="RefSeq" id="XP_011317424.1">
    <property type="nucleotide sequence ID" value="XM_011319122.1"/>
</dbReference>
<dbReference type="SMR" id="I1RDA9"/>
<dbReference type="ESTHER" id="gibze-i1rda9">
    <property type="family name" value="Fungal_carboxylesterase_lipase"/>
</dbReference>
<dbReference type="KEGG" id="fgr:FGSG_01603"/>
<dbReference type="VEuPathDB" id="FungiDB:FGRAMPH1_01G03917"/>
<dbReference type="eggNOG" id="KOG4389">
    <property type="taxonomic scope" value="Eukaryota"/>
</dbReference>
<dbReference type="HOGENOM" id="CLU_006586_10_6_1"/>
<dbReference type="InParanoid" id="I1RDA9"/>
<dbReference type="OrthoDB" id="44334at110618"/>
<dbReference type="Proteomes" id="UP000070720">
    <property type="component" value="Chromosome 1"/>
</dbReference>
<dbReference type="GO" id="GO:0005576">
    <property type="term" value="C:extracellular region"/>
    <property type="evidence" value="ECO:0007669"/>
    <property type="project" value="UniProtKB-SubCell"/>
</dbReference>
<dbReference type="GO" id="GO:0016787">
    <property type="term" value="F:hydrolase activity"/>
    <property type="evidence" value="ECO:0007669"/>
    <property type="project" value="UniProtKB-KW"/>
</dbReference>
<dbReference type="GO" id="GO:0016042">
    <property type="term" value="P:lipid catabolic process"/>
    <property type="evidence" value="ECO:0007669"/>
    <property type="project" value="UniProtKB-KW"/>
</dbReference>
<dbReference type="FunFam" id="3.40.50.1820:FF:000213">
    <property type="entry name" value="Carboxylic ester hydrolase"/>
    <property type="match status" value="1"/>
</dbReference>
<dbReference type="Gene3D" id="3.40.50.1820">
    <property type="entry name" value="alpha/beta hydrolase"/>
    <property type="match status" value="1"/>
</dbReference>
<dbReference type="InterPro" id="IPR029058">
    <property type="entry name" value="AB_hydrolase_fold"/>
</dbReference>
<dbReference type="InterPro" id="IPR002018">
    <property type="entry name" value="CarbesteraseB"/>
</dbReference>
<dbReference type="InterPro" id="IPR019826">
    <property type="entry name" value="Carboxylesterase_B_AS"/>
</dbReference>
<dbReference type="InterPro" id="IPR050309">
    <property type="entry name" value="Type-B_Carboxylest/Lipase"/>
</dbReference>
<dbReference type="PANTHER" id="PTHR11559">
    <property type="entry name" value="CARBOXYLESTERASE"/>
    <property type="match status" value="1"/>
</dbReference>
<dbReference type="Pfam" id="PF00135">
    <property type="entry name" value="COesterase"/>
    <property type="match status" value="1"/>
</dbReference>
<dbReference type="SUPFAM" id="SSF53474">
    <property type="entry name" value="alpha/beta-Hydrolases"/>
    <property type="match status" value="1"/>
</dbReference>
<dbReference type="PROSITE" id="PS00122">
    <property type="entry name" value="CARBOXYLESTERASE_B_1"/>
    <property type="match status" value="1"/>
</dbReference>
<comment type="function">
    <text evidence="4 6">Secreted acylglycerol lipase required for efficient utilization of saturated triglyceride lipids (PubMed:16339936, PubMed:37093014). Is not involved in virulence (PubMed:16339936).</text>
</comment>
<comment type="catalytic activity">
    <reaction evidence="4 6">
        <text>a triacylglycerol + H2O = a diacylglycerol + a fatty acid + H(+)</text>
        <dbReference type="Rhea" id="RHEA:12044"/>
        <dbReference type="ChEBI" id="CHEBI:15377"/>
        <dbReference type="ChEBI" id="CHEBI:15378"/>
        <dbReference type="ChEBI" id="CHEBI:17855"/>
        <dbReference type="ChEBI" id="CHEBI:18035"/>
        <dbReference type="ChEBI" id="CHEBI:28868"/>
        <dbReference type="EC" id="3.1.1.3"/>
    </reaction>
</comment>
<comment type="subcellular location">
    <subcellularLocation>
        <location evidence="7">Secreted</location>
    </subcellularLocation>
</comment>
<comment type="induction">
    <text evidence="4 5 6">Expression is induced in planta during the fungal infection process (PubMed:16339936). Expression is strongly induced in minimal medium supplemented with wheatgerm oil, but only weakly induced by olive oil and triolein (PubMed:16339936). Within the promoter, a CCAAT box, a CreA binding site, and a fatty acid responsive element (FARE) are required for the basal expression of LIP1, glucose suppression and fatty acid induction, respectively (PubMed:21295455). Expression is regulated by several transcription factors including MYT3, SAS, gzzc258 and gzzc066 (PubMed:37093014).</text>
</comment>
<comment type="disruption phenotype">
    <text evidence="4">Greatly reduces lipolytic activities at the early stage of incubation on minimal medium supplemented with either saturated or unsaturated lipid as the substrate (PubMed:16339936). Also leads to growth deficiency on both liquid and solid minimal media supplemented with the saturated triglyceride tristearin as the sole carbon source (PubMed:16339936). Does not affect pathogenicity (PubMed:16339936).</text>
</comment>
<comment type="similarity">
    <text evidence="8">Belongs to the type-B carboxylesterase/lipase family.</text>
</comment>
<feature type="signal peptide" evidence="1">
    <location>
        <begin position="1"/>
        <end position="20"/>
    </location>
</feature>
<feature type="chain" id="PRO_5009997653" description="Secreted triacylglycerol lipase LIP1">
    <location>
        <begin position="21"/>
        <end position="588"/>
    </location>
</feature>
<feature type="active site" description="Acyl-ester intermediate" evidence="3">
    <location>
        <position position="258"/>
    </location>
</feature>
<feature type="glycosylation site" description="N-linked (GlcNAc...) asparagine" evidence="2">
    <location>
        <position position="400"/>
    </location>
</feature>
<evidence type="ECO:0000255" key="1"/>
<evidence type="ECO:0000255" key="2">
    <source>
        <dbReference type="PROSITE-ProRule" id="PRU00498"/>
    </source>
</evidence>
<evidence type="ECO:0000255" key="3">
    <source>
        <dbReference type="PROSITE-ProRule" id="PRU10039"/>
    </source>
</evidence>
<evidence type="ECO:0000269" key="4">
    <source>
    </source>
</evidence>
<evidence type="ECO:0000269" key="5">
    <source>
    </source>
</evidence>
<evidence type="ECO:0000269" key="6">
    <source>
    </source>
</evidence>
<evidence type="ECO:0000303" key="7">
    <source>
    </source>
</evidence>
<evidence type="ECO:0000305" key="8"/>
<reference key="1">
    <citation type="journal article" date="2007" name="Science">
        <title>The Fusarium graminearum genome reveals a link between localized polymorphism and pathogen specialization.</title>
        <authorList>
            <person name="Cuomo C.A."/>
            <person name="Gueldener U."/>
            <person name="Xu J.-R."/>
            <person name="Trail F."/>
            <person name="Turgeon B.G."/>
            <person name="Di Pietro A."/>
            <person name="Walton J.D."/>
            <person name="Ma L.-J."/>
            <person name="Baker S.E."/>
            <person name="Rep M."/>
            <person name="Adam G."/>
            <person name="Antoniw J."/>
            <person name="Baldwin T."/>
            <person name="Calvo S.E."/>
            <person name="Chang Y.-L."/>
            <person name="DeCaprio D."/>
            <person name="Gale L.R."/>
            <person name="Gnerre S."/>
            <person name="Goswami R.S."/>
            <person name="Hammond-Kosack K."/>
            <person name="Harris L.J."/>
            <person name="Hilburn K."/>
            <person name="Kennell J.C."/>
            <person name="Kroken S."/>
            <person name="Magnuson J.K."/>
            <person name="Mannhaupt G."/>
            <person name="Mauceli E.W."/>
            <person name="Mewes H.-W."/>
            <person name="Mitterbauer R."/>
            <person name="Muehlbauer G."/>
            <person name="Muensterkoetter M."/>
            <person name="Nelson D."/>
            <person name="O'Donnell K."/>
            <person name="Ouellet T."/>
            <person name="Qi W."/>
            <person name="Quesneville H."/>
            <person name="Roncero M.I.G."/>
            <person name="Seong K.-Y."/>
            <person name="Tetko I.V."/>
            <person name="Urban M."/>
            <person name="Waalwijk C."/>
            <person name="Ward T.J."/>
            <person name="Yao J."/>
            <person name="Birren B.W."/>
            <person name="Kistler H.C."/>
        </authorList>
    </citation>
    <scope>NUCLEOTIDE SEQUENCE [LARGE SCALE GENOMIC DNA]</scope>
    <source>
        <strain>ATCC MYA-4620 / CBS 123657 / FGSC 9075 / NRRL 31084 / PH-1</strain>
    </source>
</reference>
<reference key="2">
    <citation type="journal article" date="2010" name="Nature">
        <title>Comparative genomics reveals mobile pathogenicity chromosomes in Fusarium.</title>
        <authorList>
            <person name="Ma L.-J."/>
            <person name="van der Does H.C."/>
            <person name="Borkovich K.A."/>
            <person name="Coleman J.J."/>
            <person name="Daboussi M.-J."/>
            <person name="Di Pietro A."/>
            <person name="Dufresne M."/>
            <person name="Freitag M."/>
            <person name="Grabherr M."/>
            <person name="Henrissat B."/>
            <person name="Houterman P.M."/>
            <person name="Kang S."/>
            <person name="Shim W.-B."/>
            <person name="Woloshuk C."/>
            <person name="Xie X."/>
            <person name="Xu J.-R."/>
            <person name="Antoniw J."/>
            <person name="Baker S.E."/>
            <person name="Bluhm B.H."/>
            <person name="Breakspear A."/>
            <person name="Brown D.W."/>
            <person name="Butchko R.A.E."/>
            <person name="Chapman S."/>
            <person name="Coulson R."/>
            <person name="Coutinho P.M."/>
            <person name="Danchin E.G.J."/>
            <person name="Diener A."/>
            <person name="Gale L.R."/>
            <person name="Gardiner D.M."/>
            <person name="Goff S."/>
            <person name="Hammond-Kosack K.E."/>
            <person name="Hilburn K."/>
            <person name="Hua-Van A."/>
            <person name="Jonkers W."/>
            <person name="Kazan K."/>
            <person name="Kodira C.D."/>
            <person name="Koehrsen M."/>
            <person name="Kumar L."/>
            <person name="Lee Y.-H."/>
            <person name="Li L."/>
            <person name="Manners J.M."/>
            <person name="Miranda-Saavedra D."/>
            <person name="Mukherjee M."/>
            <person name="Park G."/>
            <person name="Park J."/>
            <person name="Park S.-Y."/>
            <person name="Proctor R.H."/>
            <person name="Regev A."/>
            <person name="Ruiz-Roldan M.C."/>
            <person name="Sain D."/>
            <person name="Sakthikumar S."/>
            <person name="Sykes S."/>
            <person name="Schwartz D.C."/>
            <person name="Turgeon B.G."/>
            <person name="Wapinski I."/>
            <person name="Yoder O."/>
            <person name="Young S."/>
            <person name="Zeng Q."/>
            <person name="Zhou S."/>
            <person name="Galagan J."/>
            <person name="Cuomo C.A."/>
            <person name="Kistler H.C."/>
            <person name="Rep M."/>
        </authorList>
    </citation>
    <scope>GENOME REANNOTATION</scope>
    <source>
        <strain>ATCC MYA-4620 / CBS 123657 / FGSC 9075 / NRRL 31084 / PH-1</strain>
    </source>
</reference>
<reference key="3">
    <citation type="journal article" date="2015" name="BMC Genomics">
        <title>The completed genome sequence of the pathogenic ascomycete fungus Fusarium graminearum.</title>
        <authorList>
            <person name="King R."/>
            <person name="Urban M."/>
            <person name="Hammond-Kosack M.C.U."/>
            <person name="Hassani-Pak K."/>
            <person name="Hammond-Kosack K.E."/>
        </authorList>
    </citation>
    <scope>NUCLEOTIDE SEQUENCE [LARGE SCALE GENOMIC DNA]</scope>
    <source>
        <strain>ATCC MYA-4620 / CBS 123657 / FGSC 9075 / NRRL 31084 / PH-1</strain>
    </source>
</reference>
<reference key="4">
    <citation type="journal article" date="2005" name="Microbiology">
        <title>A secreted lipase encoded by LIP1 is necessary for efficient use of saturated triglyceride lipids in Fusarium graminearum.</title>
        <authorList>
            <person name="Feng J."/>
            <person name="Liu G."/>
            <person name="Selvaraj G."/>
            <person name="Hughes G.R."/>
            <person name="Wei Y."/>
        </authorList>
    </citation>
    <scope>FUNCTION</scope>
    <scope>CATALYTIC ACTIVITY</scope>
    <scope>INDUCTION</scope>
    <scope>DISRUPTION PHENOTYPE</scope>
    <scope>SUBCELLULAR LOCATION</scope>
</reference>
<reference key="5">
    <citation type="journal article" date="2011" name="Microbiol. Res.">
        <title>Analysis of the promoter region of the gene LIP1 encoding triglyceride lipase from Fusarium graminearum.</title>
        <authorList>
            <person name="Feng J."/>
            <person name="Bhadauria V."/>
            <person name="Liu G."/>
            <person name="Selvaraj G."/>
            <person name="Hughes G.R."/>
            <person name="Wei Y."/>
        </authorList>
    </citation>
    <scope>INDUCTION</scope>
</reference>
<reference key="6">
    <citation type="journal article" date="2023" name="Microbiol. Spectr.">
        <title>Genetic and transcriptional regulatory mechanisms of lipase activity in the plant pathogenic fungus Fusarium graminearum.</title>
        <authorList>
            <person name="Kim S."/>
            <person name="Lee J."/>
            <person name="Park J."/>
            <person name="Choi S."/>
            <person name="Bui D.C."/>
            <person name="Kim J.E."/>
            <person name="Shin J."/>
            <person name="Kim H."/>
            <person name="Choi G.J."/>
            <person name="Lee Y.W."/>
            <person name="Chang P.S."/>
            <person name="Son H."/>
        </authorList>
    </citation>
    <scope>INDUCTION</scope>
    <scope>FUNCTION</scope>
    <scope>CATALYTIC ACTIVITY</scope>
</reference>
<keyword id="KW-0325">Glycoprotein</keyword>
<keyword id="KW-0378">Hydrolase</keyword>
<keyword id="KW-0442">Lipid degradation</keyword>
<keyword id="KW-0443">Lipid metabolism</keyword>
<keyword id="KW-1185">Reference proteome</keyword>
<keyword id="KW-0964">Secreted</keyword>
<keyword id="KW-0732">Signal</keyword>
<sequence>MRFSGFVSGLGLGLLTAVSASPAAFPAPASIPDPIPAPVAPASPAIEERAAKVTVAVPSGTVVGSSSGKVDSFRGIPFADPPTGSLRLRPPKRLSKSLGTFDASGLSAAACPQMFISSGGQSVITEFLSDFLAVPFLTPITGQEDCLTITVQRPAGTKAGDKLPVLFWIFGGGFELGSSAMYDGTSLLSTAIDQSQPFIYVAVNYRVAGFGFMPGAEIKKDGSSNLGLLDQRMGLEWVADNIASFGGDPEKVTIWGESAGSISVLDQMVLYGGDASYKGKSLFRGAIMNSGTIVPAEPVDSDKAQSIYDTVVKTGGCSGASDTLECLRGLSYDKFLNAANSVPGLLSYNSLALSYLPRPDGKVLPKSPDVLVATGQYHAVPMITGCQEDEGTLFALFQPNVTTTSRLVEYLQNLYFTQATKQQVTALVNTYPTTLSTGSPYRTGLLNEVFPGFKRRAAILGDLVVSLTRRIFLQAAANSNPDVPSWSYLASYDYGTPILGTFHGSDLLQVFYGLLPNNAMRSVRTYYFNFVYNLDPNKGVTKYAKWPEWKESKKLMWFETANKNSIINDDFRQDSYEFIAANAGALVV</sequence>
<name>LIP1_GIBZE</name>
<proteinExistence type="evidence at protein level"/>
<accession>I1RDA9</accession>